<comment type="function">
    <text evidence="1">Key enzyme in the regulation of glycerol uptake and metabolism. Catalyzes the phosphorylation of glycerol to yield sn-glycerol 3-phosphate.</text>
</comment>
<comment type="catalytic activity">
    <reaction evidence="1">
        <text>glycerol + ATP = sn-glycerol 3-phosphate + ADP + H(+)</text>
        <dbReference type="Rhea" id="RHEA:21644"/>
        <dbReference type="ChEBI" id="CHEBI:15378"/>
        <dbReference type="ChEBI" id="CHEBI:17754"/>
        <dbReference type="ChEBI" id="CHEBI:30616"/>
        <dbReference type="ChEBI" id="CHEBI:57597"/>
        <dbReference type="ChEBI" id="CHEBI:456216"/>
        <dbReference type="EC" id="2.7.1.30"/>
    </reaction>
</comment>
<comment type="activity regulation">
    <text evidence="1">Activated by phosphorylation and inhibited by fructose 1,6-bisphosphate (FBP).</text>
</comment>
<comment type="pathway">
    <text evidence="1">Polyol metabolism; glycerol degradation via glycerol kinase pathway; sn-glycerol 3-phosphate from glycerol: step 1/1.</text>
</comment>
<comment type="subunit">
    <text evidence="1">Homotetramer and homodimer (in equilibrium).</text>
</comment>
<comment type="PTM">
    <text evidence="1">The phosphoenolpyruvate-dependent sugar phosphotransferase system (PTS), including enzyme I, and histidine-containing protein (HPr) are required for the phosphorylation, which leads to the activation of the enzyme.</text>
</comment>
<comment type="similarity">
    <text evidence="1">Belongs to the FGGY kinase family.</text>
</comment>
<keyword id="KW-0067">ATP-binding</keyword>
<keyword id="KW-0319">Glycerol metabolism</keyword>
<keyword id="KW-0418">Kinase</keyword>
<keyword id="KW-0547">Nucleotide-binding</keyword>
<keyword id="KW-0597">Phosphoprotein</keyword>
<keyword id="KW-0808">Transferase</keyword>
<gene>
    <name evidence="1" type="primary">glpK</name>
    <name type="ordered locus">spyM18_1696</name>
</gene>
<name>GLPK_STRP8</name>
<sequence>MSQEKYIMAIDQGTTSSRAIIFNQKGEKVSSSQKEFPQIFPHAGWVEHNANQIWNSVQSVIAGAFIESSIKPSQIEAIGITNQRETTVVWDKKTGVPIYNAIVWQSRQTAPIAEQLKQDGHTKMIHEKTGLVIDAYFSATKIRWILDHVPGAQERAEKGELLFGTIDTWLVWKLTDGAVHVTDYSNAARTMLYNIKDLTWDDEILELLNIPKDMLPEVKSNSEIYGKTAAFHFYGGEVPISGMAGDQQAALFGQLAFEPGMVKNTYGTGSFIIMNTGDEMQLSSNNLLTTIGYGIGGKVHYALEGSIFIAGSAIQWLRDGLKMIETSPESEQFALASTSDDEVYVVPAFTGLGAPYWDSNARGSVFGLTRGTSKEDFVKATLQSIAYQVRDVIDTMQVDSGIDIQQLRVDGGAAMNNMLMQFQADILGIDIARAKNLETTALGAAFLAGLAVGYWEDMDALKELNATGQLFKASMNESRKEKLYKGWKRAVKATQVFTQEEDADDDAK</sequence>
<reference key="1">
    <citation type="journal article" date="2002" name="Proc. Natl. Acad. Sci. U.S.A.">
        <title>Genome sequence and comparative microarray analysis of serotype M18 group A Streptococcus strains associated with acute rheumatic fever outbreaks.</title>
        <authorList>
            <person name="Smoot J.C."/>
            <person name="Barbian K.D."/>
            <person name="Van Gompel J.J."/>
            <person name="Smoot L.M."/>
            <person name="Chaussee M.S."/>
            <person name="Sylva G.L."/>
            <person name="Sturdevant D.E."/>
            <person name="Ricklefs S.M."/>
            <person name="Porcella S.F."/>
            <person name="Parkins L.D."/>
            <person name="Beres S.B."/>
            <person name="Campbell D.S."/>
            <person name="Smith T.M."/>
            <person name="Zhang Q."/>
            <person name="Kapur V."/>
            <person name="Daly J.A."/>
            <person name="Veasy L.G."/>
            <person name="Musser J.M."/>
        </authorList>
    </citation>
    <scope>NUCLEOTIDE SEQUENCE [LARGE SCALE GENOMIC DNA]</scope>
    <source>
        <strain>MGAS8232</strain>
    </source>
</reference>
<feature type="chain" id="PRO_0000059510" description="Glycerol kinase">
    <location>
        <begin position="1"/>
        <end position="508"/>
    </location>
</feature>
<feature type="binding site" evidence="1">
    <location>
        <position position="14"/>
    </location>
    <ligand>
        <name>ADP</name>
        <dbReference type="ChEBI" id="CHEBI:456216"/>
    </ligand>
</feature>
<feature type="binding site" evidence="1">
    <location>
        <position position="14"/>
    </location>
    <ligand>
        <name>ATP</name>
        <dbReference type="ChEBI" id="CHEBI:30616"/>
    </ligand>
</feature>
<feature type="binding site" evidence="1">
    <location>
        <position position="14"/>
    </location>
    <ligand>
        <name>sn-glycerol 3-phosphate</name>
        <dbReference type="ChEBI" id="CHEBI:57597"/>
    </ligand>
</feature>
<feature type="binding site" evidence="1">
    <location>
        <position position="15"/>
    </location>
    <ligand>
        <name>ATP</name>
        <dbReference type="ChEBI" id="CHEBI:30616"/>
    </ligand>
</feature>
<feature type="binding site" evidence="1">
    <location>
        <position position="16"/>
    </location>
    <ligand>
        <name>ATP</name>
        <dbReference type="ChEBI" id="CHEBI:30616"/>
    </ligand>
</feature>
<feature type="binding site" evidence="1">
    <location>
        <position position="18"/>
    </location>
    <ligand>
        <name>ADP</name>
        <dbReference type="ChEBI" id="CHEBI:456216"/>
    </ligand>
</feature>
<feature type="binding site" evidence="1">
    <location>
        <position position="84"/>
    </location>
    <ligand>
        <name>glycerol</name>
        <dbReference type="ChEBI" id="CHEBI:17754"/>
    </ligand>
</feature>
<feature type="binding site" evidence="1">
    <location>
        <position position="84"/>
    </location>
    <ligand>
        <name>sn-glycerol 3-phosphate</name>
        <dbReference type="ChEBI" id="CHEBI:57597"/>
    </ligand>
</feature>
<feature type="binding site" evidence="1">
    <location>
        <position position="85"/>
    </location>
    <ligand>
        <name>glycerol</name>
        <dbReference type="ChEBI" id="CHEBI:17754"/>
    </ligand>
</feature>
<feature type="binding site" evidence="1">
    <location>
        <position position="85"/>
    </location>
    <ligand>
        <name>sn-glycerol 3-phosphate</name>
        <dbReference type="ChEBI" id="CHEBI:57597"/>
    </ligand>
</feature>
<feature type="binding site" evidence="1">
    <location>
        <position position="136"/>
    </location>
    <ligand>
        <name>glycerol</name>
        <dbReference type="ChEBI" id="CHEBI:17754"/>
    </ligand>
</feature>
<feature type="binding site" evidence="1">
    <location>
        <position position="136"/>
    </location>
    <ligand>
        <name>sn-glycerol 3-phosphate</name>
        <dbReference type="ChEBI" id="CHEBI:57597"/>
    </ligand>
</feature>
<feature type="binding site" evidence="1">
    <location>
        <position position="246"/>
    </location>
    <ligand>
        <name>glycerol</name>
        <dbReference type="ChEBI" id="CHEBI:17754"/>
    </ligand>
</feature>
<feature type="binding site" evidence="1">
    <location>
        <position position="246"/>
    </location>
    <ligand>
        <name>sn-glycerol 3-phosphate</name>
        <dbReference type="ChEBI" id="CHEBI:57597"/>
    </ligand>
</feature>
<feature type="binding site" evidence="1">
    <location>
        <position position="247"/>
    </location>
    <ligand>
        <name>glycerol</name>
        <dbReference type="ChEBI" id="CHEBI:17754"/>
    </ligand>
</feature>
<feature type="binding site" evidence="1">
    <location>
        <position position="268"/>
    </location>
    <ligand>
        <name>ADP</name>
        <dbReference type="ChEBI" id="CHEBI:456216"/>
    </ligand>
</feature>
<feature type="binding site" evidence="1">
    <location>
        <position position="268"/>
    </location>
    <ligand>
        <name>ATP</name>
        <dbReference type="ChEBI" id="CHEBI:30616"/>
    </ligand>
</feature>
<feature type="binding site" evidence="1">
    <location>
        <position position="311"/>
    </location>
    <ligand>
        <name>ADP</name>
        <dbReference type="ChEBI" id="CHEBI:456216"/>
    </ligand>
</feature>
<feature type="binding site" evidence="1">
    <location>
        <position position="311"/>
    </location>
    <ligand>
        <name>ATP</name>
        <dbReference type="ChEBI" id="CHEBI:30616"/>
    </ligand>
</feature>
<feature type="binding site" evidence="1">
    <location>
        <position position="315"/>
    </location>
    <ligand>
        <name>ATP</name>
        <dbReference type="ChEBI" id="CHEBI:30616"/>
    </ligand>
</feature>
<feature type="binding site" evidence="1">
    <location>
        <position position="412"/>
    </location>
    <ligand>
        <name>ADP</name>
        <dbReference type="ChEBI" id="CHEBI:456216"/>
    </ligand>
</feature>
<feature type="binding site" evidence="1">
    <location>
        <position position="412"/>
    </location>
    <ligand>
        <name>ATP</name>
        <dbReference type="ChEBI" id="CHEBI:30616"/>
    </ligand>
</feature>
<feature type="binding site" evidence="1">
    <location>
        <position position="416"/>
    </location>
    <ligand>
        <name>ADP</name>
        <dbReference type="ChEBI" id="CHEBI:456216"/>
    </ligand>
</feature>
<feature type="modified residue" description="Phosphohistidine; by HPr" evidence="1">
    <location>
        <position position="232"/>
    </location>
</feature>
<protein>
    <recommendedName>
        <fullName evidence="1">Glycerol kinase</fullName>
        <ecNumber evidence="1">2.7.1.30</ecNumber>
    </recommendedName>
    <alternativeName>
        <fullName evidence="1">ATP:glycerol 3-phosphotransferase</fullName>
    </alternativeName>
    <alternativeName>
        <fullName evidence="1">Glycerokinase</fullName>
        <shortName evidence="1">GK</shortName>
    </alternativeName>
</protein>
<accession>Q8NZW9</accession>
<proteinExistence type="inferred from homology"/>
<dbReference type="EC" id="2.7.1.30" evidence="1"/>
<dbReference type="EMBL" id="AE009949">
    <property type="protein sequence ID" value="AAL98231.1"/>
    <property type="molecule type" value="Genomic_DNA"/>
</dbReference>
<dbReference type="RefSeq" id="WP_011018084.1">
    <property type="nucleotide sequence ID" value="NC_003485.1"/>
</dbReference>
<dbReference type="SMR" id="Q8NZW9"/>
<dbReference type="KEGG" id="spm:spyM18_1696"/>
<dbReference type="HOGENOM" id="CLU_009281_2_3_9"/>
<dbReference type="UniPathway" id="UPA00618">
    <property type="reaction ID" value="UER00672"/>
</dbReference>
<dbReference type="GO" id="GO:0005829">
    <property type="term" value="C:cytosol"/>
    <property type="evidence" value="ECO:0007669"/>
    <property type="project" value="TreeGrafter"/>
</dbReference>
<dbReference type="GO" id="GO:0005524">
    <property type="term" value="F:ATP binding"/>
    <property type="evidence" value="ECO:0007669"/>
    <property type="project" value="UniProtKB-UniRule"/>
</dbReference>
<dbReference type="GO" id="GO:0004370">
    <property type="term" value="F:glycerol kinase activity"/>
    <property type="evidence" value="ECO:0000250"/>
    <property type="project" value="UniProtKB"/>
</dbReference>
<dbReference type="GO" id="GO:0019563">
    <property type="term" value="P:glycerol catabolic process"/>
    <property type="evidence" value="ECO:0007669"/>
    <property type="project" value="UniProtKB-UniRule"/>
</dbReference>
<dbReference type="GO" id="GO:0006071">
    <property type="term" value="P:glycerol metabolic process"/>
    <property type="evidence" value="ECO:0000250"/>
    <property type="project" value="UniProtKB"/>
</dbReference>
<dbReference type="GO" id="GO:0006072">
    <property type="term" value="P:glycerol-3-phosphate metabolic process"/>
    <property type="evidence" value="ECO:0007669"/>
    <property type="project" value="InterPro"/>
</dbReference>
<dbReference type="CDD" id="cd07786">
    <property type="entry name" value="FGGY_EcGK_like"/>
    <property type="match status" value="1"/>
</dbReference>
<dbReference type="FunFam" id="3.30.420.40:FF:000007">
    <property type="entry name" value="Glycerol kinase"/>
    <property type="match status" value="1"/>
</dbReference>
<dbReference type="FunFam" id="3.30.420.40:FF:000008">
    <property type="entry name" value="Glycerol kinase"/>
    <property type="match status" value="1"/>
</dbReference>
<dbReference type="Gene3D" id="3.30.420.40">
    <property type="match status" value="2"/>
</dbReference>
<dbReference type="HAMAP" id="MF_00186">
    <property type="entry name" value="Glycerol_kin"/>
    <property type="match status" value="1"/>
</dbReference>
<dbReference type="InterPro" id="IPR043129">
    <property type="entry name" value="ATPase_NBD"/>
</dbReference>
<dbReference type="InterPro" id="IPR000577">
    <property type="entry name" value="Carb_kinase_FGGY"/>
</dbReference>
<dbReference type="InterPro" id="IPR018483">
    <property type="entry name" value="Carb_kinase_FGGY_CS"/>
</dbReference>
<dbReference type="InterPro" id="IPR018485">
    <property type="entry name" value="FGGY_C"/>
</dbReference>
<dbReference type="InterPro" id="IPR018484">
    <property type="entry name" value="FGGY_N"/>
</dbReference>
<dbReference type="InterPro" id="IPR005999">
    <property type="entry name" value="Glycerol_kin"/>
</dbReference>
<dbReference type="NCBIfam" id="TIGR01311">
    <property type="entry name" value="glycerol_kin"/>
    <property type="match status" value="1"/>
</dbReference>
<dbReference type="NCBIfam" id="NF000756">
    <property type="entry name" value="PRK00047.1"/>
    <property type="match status" value="1"/>
</dbReference>
<dbReference type="PANTHER" id="PTHR10196:SF69">
    <property type="entry name" value="GLYCEROL KINASE"/>
    <property type="match status" value="1"/>
</dbReference>
<dbReference type="PANTHER" id="PTHR10196">
    <property type="entry name" value="SUGAR KINASE"/>
    <property type="match status" value="1"/>
</dbReference>
<dbReference type="Pfam" id="PF02782">
    <property type="entry name" value="FGGY_C"/>
    <property type="match status" value="1"/>
</dbReference>
<dbReference type="Pfam" id="PF00370">
    <property type="entry name" value="FGGY_N"/>
    <property type="match status" value="1"/>
</dbReference>
<dbReference type="PIRSF" id="PIRSF000538">
    <property type="entry name" value="GlpK"/>
    <property type="match status" value="1"/>
</dbReference>
<dbReference type="SUPFAM" id="SSF53067">
    <property type="entry name" value="Actin-like ATPase domain"/>
    <property type="match status" value="2"/>
</dbReference>
<dbReference type="PROSITE" id="PS00933">
    <property type="entry name" value="FGGY_KINASES_1"/>
    <property type="match status" value="1"/>
</dbReference>
<dbReference type="PROSITE" id="PS00445">
    <property type="entry name" value="FGGY_KINASES_2"/>
    <property type="match status" value="1"/>
</dbReference>
<organism>
    <name type="scientific">Streptococcus pyogenes serotype M18 (strain MGAS8232)</name>
    <dbReference type="NCBI Taxonomy" id="186103"/>
    <lineage>
        <taxon>Bacteria</taxon>
        <taxon>Bacillati</taxon>
        <taxon>Bacillota</taxon>
        <taxon>Bacilli</taxon>
        <taxon>Lactobacillales</taxon>
        <taxon>Streptococcaceae</taxon>
        <taxon>Streptococcus</taxon>
    </lineage>
</organism>
<evidence type="ECO:0000255" key="1">
    <source>
        <dbReference type="HAMAP-Rule" id="MF_00186"/>
    </source>
</evidence>